<reference key="1">
    <citation type="journal article" date="1993" name="Dev. Genet.">
        <title>Sequence analysis of translationally controlled maternal mRNAs from Urechis caupo.</title>
        <authorList>
            <person name="Rosenthal E.T."/>
        </authorList>
    </citation>
    <scope>NUCLEOTIDE SEQUENCE [MRNA]</scope>
</reference>
<dbReference type="EMBL" id="U30454">
    <property type="protein sequence ID" value="AAA74095.1"/>
    <property type="molecule type" value="mRNA"/>
</dbReference>
<dbReference type="SMR" id="P49154"/>
<dbReference type="GO" id="GO:0022627">
    <property type="term" value="C:cytosolic small ribosomal subunit"/>
    <property type="evidence" value="ECO:0007669"/>
    <property type="project" value="TreeGrafter"/>
</dbReference>
<dbReference type="GO" id="GO:0003723">
    <property type="term" value="F:RNA binding"/>
    <property type="evidence" value="ECO:0007669"/>
    <property type="project" value="InterPro"/>
</dbReference>
<dbReference type="GO" id="GO:0003735">
    <property type="term" value="F:structural constituent of ribosome"/>
    <property type="evidence" value="ECO:0007669"/>
    <property type="project" value="InterPro"/>
</dbReference>
<dbReference type="GO" id="GO:0006412">
    <property type="term" value="P:translation"/>
    <property type="evidence" value="ECO:0007669"/>
    <property type="project" value="InterPro"/>
</dbReference>
<dbReference type="FunFam" id="3.30.160.20:FF:000133">
    <property type="entry name" value="40S ribosomal protein S2"/>
    <property type="match status" value="1"/>
</dbReference>
<dbReference type="FunFam" id="3.30.230.10:FF:000004">
    <property type="entry name" value="40S ribosomal protein S2"/>
    <property type="match status" value="1"/>
</dbReference>
<dbReference type="Gene3D" id="3.30.160.20">
    <property type="match status" value="1"/>
</dbReference>
<dbReference type="Gene3D" id="3.30.230.10">
    <property type="match status" value="1"/>
</dbReference>
<dbReference type="InterPro" id="IPR020568">
    <property type="entry name" value="Ribosomal_Su5_D2-typ_SF"/>
</dbReference>
<dbReference type="InterPro" id="IPR000851">
    <property type="entry name" value="Ribosomal_uS5"/>
</dbReference>
<dbReference type="InterPro" id="IPR005324">
    <property type="entry name" value="Ribosomal_uS5_C"/>
</dbReference>
<dbReference type="InterPro" id="IPR005711">
    <property type="entry name" value="Ribosomal_uS5_euk/arc"/>
</dbReference>
<dbReference type="InterPro" id="IPR013810">
    <property type="entry name" value="Ribosomal_uS5_N"/>
</dbReference>
<dbReference type="InterPro" id="IPR018192">
    <property type="entry name" value="Ribosomal_uS5_N_CS"/>
</dbReference>
<dbReference type="InterPro" id="IPR014721">
    <property type="entry name" value="Ribsml_uS5_D2-typ_fold_subgr"/>
</dbReference>
<dbReference type="NCBIfam" id="TIGR01020">
    <property type="entry name" value="uS5_euk_arch"/>
    <property type="match status" value="1"/>
</dbReference>
<dbReference type="PANTHER" id="PTHR13718:SF4">
    <property type="entry name" value="40S RIBOSOMAL PROTEIN S2"/>
    <property type="match status" value="1"/>
</dbReference>
<dbReference type="PANTHER" id="PTHR13718">
    <property type="entry name" value="RIBOSOMAL S SUBUNIT"/>
    <property type="match status" value="1"/>
</dbReference>
<dbReference type="Pfam" id="PF00333">
    <property type="entry name" value="Ribosomal_S5"/>
    <property type="match status" value="1"/>
</dbReference>
<dbReference type="Pfam" id="PF03719">
    <property type="entry name" value="Ribosomal_S5_C"/>
    <property type="match status" value="1"/>
</dbReference>
<dbReference type="SUPFAM" id="SSF54768">
    <property type="entry name" value="dsRNA-binding domain-like"/>
    <property type="match status" value="1"/>
</dbReference>
<dbReference type="SUPFAM" id="SSF54211">
    <property type="entry name" value="Ribosomal protein S5 domain 2-like"/>
    <property type="match status" value="1"/>
</dbReference>
<dbReference type="PROSITE" id="PS00585">
    <property type="entry name" value="RIBOSOMAL_S5"/>
    <property type="match status" value="1"/>
</dbReference>
<dbReference type="PROSITE" id="PS50881">
    <property type="entry name" value="S5_DSRBD"/>
    <property type="match status" value="1"/>
</dbReference>
<sequence length="278" mass="30063">MADAPAPAGGRGGFRGGFGGRGRGRGRGRGRGRGRGRGAKDGDKEWVPVTKLGRLVKDMKIKTLEEIYLFSLPIKEFEIIDFFLGDALKDEVLKIMPVQKQTRAGQRTRFKAFVAIGDYNGHVGLGVKCSKEVATAIRGAIILAKLSVVPVRRGYWGNKIGKPHTVPCKVTGKCGSVLVRLIPAPRGTGIVSAPVPKKLLAMAGIDDCYTSARGQTATLGNFAKATYAAIAATYSYLTPDLWRETVFTKSPYQEYTDYLAKHHGRGAVTAHPTEEKPF</sequence>
<feature type="chain" id="PRO_0000131681" description="Small ribosomal subunit protein uS5">
    <location>
        <begin position="1"/>
        <end position="278"/>
    </location>
</feature>
<feature type="domain" description="S5 DRBM" evidence="2">
    <location>
        <begin position="88"/>
        <end position="151"/>
    </location>
</feature>
<feature type="region of interest" description="Disordered" evidence="3">
    <location>
        <begin position="1"/>
        <end position="43"/>
    </location>
</feature>
<feature type="compositionally biased region" description="Gly residues" evidence="3">
    <location>
        <begin position="9"/>
        <end position="21"/>
    </location>
</feature>
<feature type="compositionally biased region" description="Basic residues" evidence="3">
    <location>
        <begin position="22"/>
        <end position="37"/>
    </location>
</feature>
<accession>P49154</accession>
<evidence type="ECO:0000250" key="1">
    <source>
        <dbReference type="UniProtKB" id="P25443"/>
    </source>
</evidence>
<evidence type="ECO:0000255" key="2">
    <source>
        <dbReference type="PROSITE-ProRule" id="PRU00268"/>
    </source>
</evidence>
<evidence type="ECO:0000256" key="3">
    <source>
        <dbReference type="SAM" id="MobiDB-lite"/>
    </source>
</evidence>
<evidence type="ECO:0000305" key="4"/>
<name>RS2_URECA</name>
<protein>
    <recommendedName>
        <fullName evidence="4">Small ribosomal subunit protein uS5</fullName>
    </recommendedName>
    <alternativeName>
        <fullName>40S ribosomal protein S2</fullName>
    </alternativeName>
</protein>
<keyword id="KW-0687">Ribonucleoprotein</keyword>
<keyword id="KW-0689">Ribosomal protein</keyword>
<gene>
    <name type="primary">RPS2</name>
</gene>
<comment type="function">
    <text evidence="1">Component of the ribosome, a large ribonucleoprotein complex responsible for the synthesis of proteins in the cell. The small ribosomal subunit (SSU) binds messenger RNAs (mRNAs) and translates the encoded message by selecting cognate aminoacyl-transfer RNA (tRNA) molecules. The large subunit (LSU) contains the ribosomal catalytic site termed the peptidyl transferase center (PTC), which catalyzes the formation of peptide bonds, thereby polymerizing the amino acids delivered by tRNAs into a polypeptide chain. The nascent polypeptides leave the ribosome through a tunnel in the LSU and interact with protein factors that function in enzymatic processing, targeting, and the membrane insertion of nascent chains at the exit of the ribosomal tunnel. Plays a role in the assembly and function of the 40S ribosomal subunit. Mutations in this protein affects the control of translational fidelity. Involved in nucleolar processing of pre-18S ribosomal RNA and ribosome assembly.</text>
</comment>
<comment type="similarity">
    <text evidence="4">Belongs to the universal ribosomal protein uS5 family.</text>
</comment>
<proteinExistence type="evidence at transcript level"/>
<organism>
    <name type="scientific">Urechis caupo</name>
    <name type="common">Innkeeper worm</name>
    <name type="synonym">Spoonworm</name>
    <dbReference type="NCBI Taxonomy" id="6431"/>
    <lineage>
        <taxon>Eukaryota</taxon>
        <taxon>Metazoa</taxon>
        <taxon>Spiralia</taxon>
        <taxon>Lophotrochozoa</taxon>
        <taxon>Annelida</taxon>
        <taxon>Polychaeta</taxon>
        <taxon>Echiura</taxon>
        <taxon>Xenopneusta</taxon>
        <taxon>Urechidae</taxon>
        <taxon>Urechis</taxon>
    </lineage>
</organism>